<dbReference type="EC" id="2.3.1.286" evidence="1"/>
<dbReference type="EMBL" id="AE000511">
    <property type="protein sequence ID" value="AAD08305.1"/>
    <property type="status" value="ALT_FRAME"/>
    <property type="molecule type" value="Genomic_DNA"/>
</dbReference>
<dbReference type="PIR" id="C64677">
    <property type="entry name" value="C64677"/>
</dbReference>
<dbReference type="SMR" id="O25849"/>
<dbReference type="DIP" id="DIP-3690N"/>
<dbReference type="FunCoup" id="O25849">
    <property type="interactions" value="249"/>
</dbReference>
<dbReference type="IntAct" id="O25849">
    <property type="interactions" value="27"/>
</dbReference>
<dbReference type="MINT" id="O25849"/>
<dbReference type="STRING" id="85962.HP_1259"/>
<dbReference type="PaxDb" id="85962-C694_06510"/>
<dbReference type="EnsemblBacteria" id="AAD08305">
    <property type="protein sequence ID" value="AAD08305"/>
    <property type="gene ID" value="HP_1259"/>
</dbReference>
<dbReference type="KEGG" id="hpy:HP_1259"/>
<dbReference type="eggNOG" id="COG0846">
    <property type="taxonomic scope" value="Bacteria"/>
</dbReference>
<dbReference type="InParanoid" id="O25849"/>
<dbReference type="PhylomeDB" id="O25849"/>
<dbReference type="Proteomes" id="UP000000429">
    <property type="component" value="Chromosome"/>
</dbReference>
<dbReference type="GO" id="GO:0005737">
    <property type="term" value="C:cytoplasm"/>
    <property type="evidence" value="ECO:0007669"/>
    <property type="project" value="UniProtKB-SubCell"/>
</dbReference>
<dbReference type="GO" id="GO:0017136">
    <property type="term" value="F:histone deacetylase activity, NAD-dependent"/>
    <property type="evidence" value="ECO:0000318"/>
    <property type="project" value="GO_Central"/>
</dbReference>
<dbReference type="GO" id="GO:0070403">
    <property type="term" value="F:NAD+ binding"/>
    <property type="evidence" value="ECO:0000318"/>
    <property type="project" value="GO_Central"/>
</dbReference>
<dbReference type="GO" id="GO:0036054">
    <property type="term" value="F:protein-malonyllysine demalonylase activity"/>
    <property type="evidence" value="ECO:0007669"/>
    <property type="project" value="InterPro"/>
</dbReference>
<dbReference type="GO" id="GO:0036055">
    <property type="term" value="F:protein-succinyllysine desuccinylase activity"/>
    <property type="evidence" value="ECO:0007669"/>
    <property type="project" value="UniProtKB-UniRule"/>
</dbReference>
<dbReference type="CDD" id="cd01412">
    <property type="entry name" value="SIRT5_Af1_CobB"/>
    <property type="match status" value="1"/>
</dbReference>
<dbReference type="Gene3D" id="3.30.1600.10">
    <property type="entry name" value="SIR2/SIRT2 'Small Domain"/>
    <property type="match status" value="1"/>
</dbReference>
<dbReference type="Gene3D" id="3.40.50.1220">
    <property type="entry name" value="TPP-binding domain"/>
    <property type="match status" value="1"/>
</dbReference>
<dbReference type="HAMAP" id="MF_01121">
    <property type="entry name" value="Sirtuin_ClassIII"/>
    <property type="match status" value="1"/>
</dbReference>
<dbReference type="InterPro" id="IPR029035">
    <property type="entry name" value="DHS-like_NAD/FAD-binding_dom"/>
</dbReference>
<dbReference type="InterPro" id="IPR050134">
    <property type="entry name" value="NAD-dep_sirtuin_deacylases"/>
</dbReference>
<dbReference type="InterPro" id="IPR003000">
    <property type="entry name" value="Sirtuin"/>
</dbReference>
<dbReference type="InterPro" id="IPR026591">
    <property type="entry name" value="Sirtuin_cat_small_dom_sf"/>
</dbReference>
<dbReference type="InterPro" id="IPR027546">
    <property type="entry name" value="Sirtuin_class_III"/>
</dbReference>
<dbReference type="InterPro" id="IPR026590">
    <property type="entry name" value="Ssirtuin_cat_dom"/>
</dbReference>
<dbReference type="PANTHER" id="PTHR11085:SF4">
    <property type="entry name" value="NAD-DEPENDENT PROTEIN DEACYLASE"/>
    <property type="match status" value="1"/>
</dbReference>
<dbReference type="PANTHER" id="PTHR11085">
    <property type="entry name" value="NAD-DEPENDENT PROTEIN DEACYLASE SIRTUIN-5, MITOCHONDRIAL-RELATED"/>
    <property type="match status" value="1"/>
</dbReference>
<dbReference type="Pfam" id="PF02146">
    <property type="entry name" value="SIR2"/>
    <property type="match status" value="1"/>
</dbReference>
<dbReference type="SUPFAM" id="SSF52467">
    <property type="entry name" value="DHS-like NAD/FAD-binding domain"/>
    <property type="match status" value="1"/>
</dbReference>
<dbReference type="PROSITE" id="PS50305">
    <property type="entry name" value="SIRTUIN"/>
    <property type="match status" value="1"/>
</dbReference>
<feature type="chain" id="PRO_0000110321" description="NAD-dependent protein deacylase">
    <location>
        <begin position="1"/>
        <end position="229"/>
    </location>
</feature>
<feature type="domain" description="Deacetylase sirtuin-type" evidence="2">
    <location>
        <begin position="1"/>
        <end position="227"/>
    </location>
</feature>
<feature type="active site" description="Proton acceptor" evidence="1">
    <location>
        <position position="104"/>
    </location>
</feature>
<feature type="binding site" evidence="1">
    <location>
        <begin position="9"/>
        <end position="28"/>
    </location>
    <ligand>
        <name>NAD(+)</name>
        <dbReference type="ChEBI" id="CHEBI:57540"/>
    </ligand>
</feature>
<feature type="binding site" evidence="1">
    <location>
        <position position="53"/>
    </location>
    <ligand>
        <name>substrate</name>
    </ligand>
</feature>
<feature type="binding site" evidence="1">
    <location>
        <position position="56"/>
    </location>
    <ligand>
        <name>substrate</name>
    </ligand>
</feature>
<feature type="binding site" evidence="1">
    <location>
        <begin position="86"/>
        <end position="89"/>
    </location>
    <ligand>
        <name>NAD(+)</name>
        <dbReference type="ChEBI" id="CHEBI:57540"/>
    </ligand>
</feature>
<feature type="binding site" evidence="1">
    <location>
        <begin position="169"/>
        <end position="171"/>
    </location>
    <ligand>
        <name>NAD(+)</name>
        <dbReference type="ChEBI" id="CHEBI:57540"/>
    </ligand>
</feature>
<reference key="1">
    <citation type="journal article" date="1997" name="Nature">
        <title>The complete genome sequence of the gastric pathogen Helicobacter pylori.</title>
        <authorList>
            <person name="Tomb J.-F."/>
            <person name="White O."/>
            <person name="Kerlavage A.R."/>
            <person name="Clayton R.A."/>
            <person name="Sutton G.G."/>
            <person name="Fleischmann R.D."/>
            <person name="Ketchum K.A."/>
            <person name="Klenk H.-P."/>
            <person name="Gill S.R."/>
            <person name="Dougherty B.A."/>
            <person name="Nelson K.E."/>
            <person name="Quackenbush J."/>
            <person name="Zhou L."/>
            <person name="Kirkness E.F."/>
            <person name="Peterson S.N."/>
            <person name="Loftus B.J."/>
            <person name="Richardson D.L."/>
            <person name="Dodson R.J."/>
            <person name="Khalak H.G."/>
            <person name="Glodek A."/>
            <person name="McKenney K."/>
            <person name="FitzGerald L.M."/>
            <person name="Lee N."/>
            <person name="Adams M.D."/>
            <person name="Hickey E.K."/>
            <person name="Berg D.E."/>
            <person name="Gocayne J.D."/>
            <person name="Utterback T.R."/>
            <person name="Peterson J.D."/>
            <person name="Kelley J.M."/>
            <person name="Cotton M.D."/>
            <person name="Weidman J.F."/>
            <person name="Fujii C."/>
            <person name="Bowman C."/>
            <person name="Watthey L."/>
            <person name="Wallin E."/>
            <person name="Hayes W.S."/>
            <person name="Borodovsky M."/>
            <person name="Karp P.D."/>
            <person name="Smith H.O."/>
            <person name="Fraser C.M."/>
            <person name="Venter J.C."/>
        </authorList>
    </citation>
    <scope>NUCLEOTIDE SEQUENCE [LARGE SCALE GENOMIC DNA]</scope>
    <source>
        <strain>ATCC 700392 / 26695</strain>
    </source>
</reference>
<protein>
    <recommendedName>
        <fullName evidence="1">NAD-dependent protein deacylase</fullName>
        <ecNumber evidence="1">2.3.1.286</ecNumber>
    </recommendedName>
    <alternativeName>
        <fullName evidence="1">Regulatory protein SIR2 homolog</fullName>
    </alternativeName>
</protein>
<proteinExistence type="inferred from homology"/>
<sequence length="229" mass="25966">MKNLVILSGAGISAESGIKTFRDADGLWEGHDIMEVASPYGWKKNPQKVLDFYNQRRRQLFEVYPNKAHKALAELEKHYQVNIITQNVDDLHERAGSSRILHLHGELLSVRSEKDPNLVYRWEKDLNLGDLAKDKSQLRPDIVWFGEAVPLLKEAISLVKQAHLLIIIGTSLQVYPAASLYTHAHKDALIYYIDPKAKNAHLPQNVQCINESAVHAMQDLMPKLIEMAS</sequence>
<name>NPD_HELPY</name>
<keyword id="KW-0963">Cytoplasm</keyword>
<keyword id="KW-0520">NAD</keyword>
<keyword id="KW-1185">Reference proteome</keyword>
<keyword id="KW-0808">Transferase</keyword>
<evidence type="ECO:0000255" key="1">
    <source>
        <dbReference type="HAMAP-Rule" id="MF_01121"/>
    </source>
</evidence>
<evidence type="ECO:0000255" key="2">
    <source>
        <dbReference type="PROSITE-ProRule" id="PRU00236"/>
    </source>
</evidence>
<evidence type="ECO:0000305" key="3"/>
<comment type="function">
    <text evidence="1">NAD-dependent lysine deacetylase and desuccinylase that specifically removes acetyl and succinyl groups on target proteins. Modulates the activities of several proteins which are inactive in their acylated form.</text>
</comment>
<comment type="catalytic activity">
    <reaction evidence="1">
        <text>N(6)-acetyl-L-lysyl-[protein] + NAD(+) + H2O = 2''-O-acetyl-ADP-D-ribose + nicotinamide + L-lysyl-[protein]</text>
        <dbReference type="Rhea" id="RHEA:43636"/>
        <dbReference type="Rhea" id="RHEA-COMP:9752"/>
        <dbReference type="Rhea" id="RHEA-COMP:10731"/>
        <dbReference type="ChEBI" id="CHEBI:15377"/>
        <dbReference type="ChEBI" id="CHEBI:17154"/>
        <dbReference type="ChEBI" id="CHEBI:29969"/>
        <dbReference type="ChEBI" id="CHEBI:57540"/>
        <dbReference type="ChEBI" id="CHEBI:61930"/>
        <dbReference type="ChEBI" id="CHEBI:83767"/>
        <dbReference type="EC" id="2.3.1.286"/>
    </reaction>
</comment>
<comment type="catalytic activity">
    <reaction evidence="1">
        <text>N(6)-succinyl-L-lysyl-[protein] + NAD(+) + H2O = 2''-O-succinyl-ADP-D-ribose + nicotinamide + L-lysyl-[protein]</text>
        <dbReference type="Rhea" id="RHEA:47668"/>
        <dbReference type="Rhea" id="RHEA-COMP:9752"/>
        <dbReference type="Rhea" id="RHEA-COMP:11877"/>
        <dbReference type="ChEBI" id="CHEBI:15377"/>
        <dbReference type="ChEBI" id="CHEBI:17154"/>
        <dbReference type="ChEBI" id="CHEBI:29969"/>
        <dbReference type="ChEBI" id="CHEBI:57540"/>
        <dbReference type="ChEBI" id="CHEBI:87830"/>
        <dbReference type="ChEBI" id="CHEBI:87832"/>
    </reaction>
</comment>
<comment type="subcellular location">
    <subcellularLocation>
        <location evidence="1">Cytoplasm</location>
    </subcellularLocation>
</comment>
<comment type="domain">
    <text evidence="1">2 residues (Tyr-53 and Arg-56) present in a large hydrophobic pocket are probably involved in substrate specificity. They are important for desuccinylation activity, but dispensable for deacetylation activity.</text>
</comment>
<comment type="similarity">
    <text evidence="1">Belongs to the sirtuin family. Class III subfamily.</text>
</comment>
<comment type="sequence caution" evidence="3">
    <conflict type="frameshift">
        <sequence resource="EMBL-CDS" id="AAD08305"/>
    </conflict>
</comment>
<organism>
    <name type="scientific">Helicobacter pylori (strain ATCC 700392 / 26695)</name>
    <name type="common">Campylobacter pylori</name>
    <dbReference type="NCBI Taxonomy" id="85962"/>
    <lineage>
        <taxon>Bacteria</taxon>
        <taxon>Pseudomonadati</taxon>
        <taxon>Campylobacterota</taxon>
        <taxon>Epsilonproteobacteria</taxon>
        <taxon>Campylobacterales</taxon>
        <taxon>Helicobacteraceae</taxon>
        <taxon>Helicobacter</taxon>
    </lineage>
</organism>
<accession>O25849</accession>
<gene>
    <name evidence="1" type="primary">cobB</name>
    <name type="ordered locus">HP_1259</name>
</gene>